<proteinExistence type="inferred from homology"/>
<reference key="1">
    <citation type="journal article" date="2008" name="BMC Genomics">
        <title>Complete genome of Phenylobacterium zucineum - a novel facultative intracellular bacterium isolated from human erythroleukemia cell line K562.</title>
        <authorList>
            <person name="Luo Y."/>
            <person name="Xu X."/>
            <person name="Ding Z."/>
            <person name="Liu Z."/>
            <person name="Zhang B."/>
            <person name="Yan Z."/>
            <person name="Sun J."/>
            <person name="Hu S."/>
            <person name="Hu X."/>
        </authorList>
    </citation>
    <scope>NUCLEOTIDE SEQUENCE [LARGE SCALE GENOMIC DNA]</scope>
    <source>
        <strain>HLK1</strain>
    </source>
</reference>
<dbReference type="EMBL" id="CP000747">
    <property type="protein sequence ID" value="ACG79839.1"/>
    <property type="molecule type" value="Genomic_DNA"/>
</dbReference>
<dbReference type="RefSeq" id="WP_012523977.1">
    <property type="nucleotide sequence ID" value="NC_011144.1"/>
</dbReference>
<dbReference type="SMR" id="B4RC46"/>
<dbReference type="STRING" id="450851.PHZ_c3430"/>
<dbReference type="KEGG" id="pzu:PHZ_c3430"/>
<dbReference type="eggNOG" id="COG0268">
    <property type="taxonomic scope" value="Bacteria"/>
</dbReference>
<dbReference type="HOGENOM" id="CLU_160655_3_0_5"/>
<dbReference type="OrthoDB" id="9807974at2"/>
<dbReference type="Proteomes" id="UP000001868">
    <property type="component" value="Chromosome"/>
</dbReference>
<dbReference type="GO" id="GO:0005829">
    <property type="term" value="C:cytosol"/>
    <property type="evidence" value="ECO:0007669"/>
    <property type="project" value="TreeGrafter"/>
</dbReference>
<dbReference type="GO" id="GO:0015935">
    <property type="term" value="C:small ribosomal subunit"/>
    <property type="evidence" value="ECO:0007669"/>
    <property type="project" value="TreeGrafter"/>
</dbReference>
<dbReference type="GO" id="GO:0070181">
    <property type="term" value="F:small ribosomal subunit rRNA binding"/>
    <property type="evidence" value="ECO:0007669"/>
    <property type="project" value="TreeGrafter"/>
</dbReference>
<dbReference type="GO" id="GO:0003735">
    <property type="term" value="F:structural constituent of ribosome"/>
    <property type="evidence" value="ECO:0007669"/>
    <property type="project" value="InterPro"/>
</dbReference>
<dbReference type="GO" id="GO:0006412">
    <property type="term" value="P:translation"/>
    <property type="evidence" value="ECO:0007669"/>
    <property type="project" value="UniProtKB-UniRule"/>
</dbReference>
<dbReference type="FunFam" id="1.20.58.110:FF:000001">
    <property type="entry name" value="30S ribosomal protein S20"/>
    <property type="match status" value="1"/>
</dbReference>
<dbReference type="Gene3D" id="1.20.58.110">
    <property type="entry name" value="Ribosomal protein S20"/>
    <property type="match status" value="1"/>
</dbReference>
<dbReference type="HAMAP" id="MF_00500">
    <property type="entry name" value="Ribosomal_bS20"/>
    <property type="match status" value="1"/>
</dbReference>
<dbReference type="InterPro" id="IPR002583">
    <property type="entry name" value="Ribosomal_bS20"/>
</dbReference>
<dbReference type="InterPro" id="IPR036510">
    <property type="entry name" value="Ribosomal_bS20_sf"/>
</dbReference>
<dbReference type="NCBIfam" id="TIGR00029">
    <property type="entry name" value="S20"/>
    <property type="match status" value="1"/>
</dbReference>
<dbReference type="PANTHER" id="PTHR33398">
    <property type="entry name" value="30S RIBOSOMAL PROTEIN S20"/>
    <property type="match status" value="1"/>
</dbReference>
<dbReference type="PANTHER" id="PTHR33398:SF1">
    <property type="entry name" value="SMALL RIBOSOMAL SUBUNIT PROTEIN BS20C"/>
    <property type="match status" value="1"/>
</dbReference>
<dbReference type="Pfam" id="PF01649">
    <property type="entry name" value="Ribosomal_S20p"/>
    <property type="match status" value="1"/>
</dbReference>
<dbReference type="SUPFAM" id="SSF46992">
    <property type="entry name" value="Ribosomal protein S20"/>
    <property type="match status" value="1"/>
</dbReference>
<keyword id="KW-1185">Reference proteome</keyword>
<keyword id="KW-0687">Ribonucleoprotein</keyword>
<keyword id="KW-0689">Ribosomal protein</keyword>
<keyword id="KW-0694">RNA-binding</keyword>
<keyword id="KW-0699">rRNA-binding</keyword>
<name>RS20_PHEZH</name>
<evidence type="ECO:0000255" key="1">
    <source>
        <dbReference type="HAMAP-Rule" id="MF_00500"/>
    </source>
</evidence>
<evidence type="ECO:0000305" key="2"/>
<feature type="chain" id="PRO_1000126490" description="Small ribosomal subunit protein bS20">
    <location>
        <begin position="1"/>
        <end position="89"/>
    </location>
</feature>
<protein>
    <recommendedName>
        <fullName evidence="1">Small ribosomal subunit protein bS20</fullName>
    </recommendedName>
    <alternativeName>
        <fullName evidence="2">30S ribosomal protein S20</fullName>
    </alternativeName>
</protein>
<comment type="function">
    <text evidence="1">Binds directly to 16S ribosomal RNA.</text>
</comment>
<comment type="similarity">
    <text evidence="1">Belongs to the bacterial ribosomal protein bS20 family.</text>
</comment>
<gene>
    <name evidence="1" type="primary">rpsT</name>
    <name type="ordered locus">PHZ_c3430</name>
</gene>
<accession>B4RC46</accession>
<sequence>MANTPGAKKAVRKIARRTEVNTARRSRVRTFLRKFEEALASGDAGAAKAAFVQAQSELMRAVSKGVVHKNTGARKVSRLAARLKKLSAA</sequence>
<organism>
    <name type="scientific">Phenylobacterium zucineum (strain HLK1)</name>
    <dbReference type="NCBI Taxonomy" id="450851"/>
    <lineage>
        <taxon>Bacteria</taxon>
        <taxon>Pseudomonadati</taxon>
        <taxon>Pseudomonadota</taxon>
        <taxon>Alphaproteobacteria</taxon>
        <taxon>Caulobacterales</taxon>
        <taxon>Caulobacteraceae</taxon>
        <taxon>Phenylobacterium</taxon>
    </lineage>
</organism>